<dbReference type="EMBL" id="AF370699">
    <property type="protein sequence ID" value="AAL01863.1"/>
    <property type="molecule type" value="Genomic_DNA"/>
</dbReference>
<dbReference type="SMR" id="Q94WX2"/>
<dbReference type="GO" id="GO:0005743">
    <property type="term" value="C:mitochondrial inner membrane"/>
    <property type="evidence" value="ECO:0007669"/>
    <property type="project" value="UniProtKB-SubCell"/>
</dbReference>
<dbReference type="GO" id="GO:0045275">
    <property type="term" value="C:respiratory chain complex III"/>
    <property type="evidence" value="ECO:0007669"/>
    <property type="project" value="InterPro"/>
</dbReference>
<dbReference type="GO" id="GO:0046872">
    <property type="term" value="F:metal ion binding"/>
    <property type="evidence" value="ECO:0007669"/>
    <property type="project" value="UniProtKB-KW"/>
</dbReference>
<dbReference type="GO" id="GO:0008121">
    <property type="term" value="F:ubiquinol-cytochrome-c reductase activity"/>
    <property type="evidence" value="ECO:0007669"/>
    <property type="project" value="InterPro"/>
</dbReference>
<dbReference type="GO" id="GO:0006122">
    <property type="term" value="P:mitochondrial electron transport, ubiquinol to cytochrome c"/>
    <property type="evidence" value="ECO:0007669"/>
    <property type="project" value="TreeGrafter"/>
</dbReference>
<dbReference type="CDD" id="cd00290">
    <property type="entry name" value="cytochrome_b_C"/>
    <property type="match status" value="1"/>
</dbReference>
<dbReference type="CDD" id="cd00284">
    <property type="entry name" value="Cytochrome_b_N"/>
    <property type="match status" value="1"/>
</dbReference>
<dbReference type="FunFam" id="1.20.810.10:FF:000002">
    <property type="entry name" value="Cytochrome b"/>
    <property type="match status" value="1"/>
</dbReference>
<dbReference type="Gene3D" id="1.20.810.10">
    <property type="entry name" value="Cytochrome Bc1 Complex, Chain C"/>
    <property type="match status" value="1"/>
</dbReference>
<dbReference type="InterPro" id="IPR005798">
    <property type="entry name" value="Cyt_b/b6_C"/>
</dbReference>
<dbReference type="InterPro" id="IPR036150">
    <property type="entry name" value="Cyt_b/b6_C_sf"/>
</dbReference>
<dbReference type="InterPro" id="IPR005797">
    <property type="entry name" value="Cyt_b/b6_N"/>
</dbReference>
<dbReference type="InterPro" id="IPR027387">
    <property type="entry name" value="Cytb/b6-like_sf"/>
</dbReference>
<dbReference type="InterPro" id="IPR030689">
    <property type="entry name" value="Cytochrome_b"/>
</dbReference>
<dbReference type="InterPro" id="IPR048260">
    <property type="entry name" value="Cytochrome_b_C_euk/bac"/>
</dbReference>
<dbReference type="InterPro" id="IPR048259">
    <property type="entry name" value="Cytochrome_b_N_euk/bac"/>
</dbReference>
<dbReference type="InterPro" id="IPR016174">
    <property type="entry name" value="Di-haem_cyt_TM"/>
</dbReference>
<dbReference type="PANTHER" id="PTHR19271">
    <property type="entry name" value="CYTOCHROME B"/>
    <property type="match status" value="1"/>
</dbReference>
<dbReference type="PANTHER" id="PTHR19271:SF16">
    <property type="entry name" value="CYTOCHROME B"/>
    <property type="match status" value="1"/>
</dbReference>
<dbReference type="Pfam" id="PF00032">
    <property type="entry name" value="Cytochrom_B_C"/>
    <property type="match status" value="1"/>
</dbReference>
<dbReference type="Pfam" id="PF00033">
    <property type="entry name" value="Cytochrome_B"/>
    <property type="match status" value="1"/>
</dbReference>
<dbReference type="PIRSF" id="PIRSF038885">
    <property type="entry name" value="COB"/>
    <property type="match status" value="1"/>
</dbReference>
<dbReference type="SUPFAM" id="SSF81648">
    <property type="entry name" value="a domain/subunit of cytochrome bc1 complex (Ubiquinol-cytochrome c reductase)"/>
    <property type="match status" value="1"/>
</dbReference>
<dbReference type="SUPFAM" id="SSF81342">
    <property type="entry name" value="Transmembrane di-heme cytochromes"/>
    <property type="match status" value="1"/>
</dbReference>
<dbReference type="PROSITE" id="PS51003">
    <property type="entry name" value="CYTB_CTER"/>
    <property type="match status" value="1"/>
</dbReference>
<dbReference type="PROSITE" id="PS51002">
    <property type="entry name" value="CYTB_NTER"/>
    <property type="match status" value="1"/>
</dbReference>
<gene>
    <name type="primary">MT-CYB</name>
    <name type="synonym">COB</name>
    <name type="synonym">CYTB</name>
    <name type="synonym">MTCYB</name>
</gene>
<accession>Q94WX2</accession>
<geneLocation type="mitochondrion"/>
<name>CYB_CTETA</name>
<sequence>MTNTRKSHPLIKIVNHSFIDLPAPSNISAWWNFGSLLGVCLGLQILTGLFLAMHYTADTTTAFSSVTHICRDVNYGWLIRYMHANGASMFFIFLYFHIGRGIYYGSYTFMDTWNIGVLLLFAVMATAFMGYVLPWGQMSFWGATVITNLLSAIPYIGPTLVEWIWGGFSVDKATLTRFFAFHFILPFIITAMVMIHLLFLHETGSNNPSGMNSDSDKIPFHPYYTIKDILGILFMMITLMTLVMFTPDLLGDPDNYTPANPLNTPPHIKPEWYFLFAYAILRSIPNKLGGVLALVLSILILMLFPILHSSKQRSMSFRPLSQCLMWMLVANLLILTWIGGQPVEHPFITIGQLASVTYFFIILILMPSTALMENKLLKW</sequence>
<protein>
    <recommendedName>
        <fullName>Cytochrome b</fullName>
    </recommendedName>
    <alternativeName>
        <fullName>Complex III subunit 3</fullName>
    </alternativeName>
    <alternativeName>
        <fullName>Complex III subunit III</fullName>
    </alternativeName>
    <alternativeName>
        <fullName>Cytochrome b-c1 complex subunit 3</fullName>
    </alternativeName>
    <alternativeName>
        <fullName>Ubiquinol-cytochrome-c reductase complex cytochrome b subunit</fullName>
    </alternativeName>
</protein>
<keyword id="KW-0249">Electron transport</keyword>
<keyword id="KW-0349">Heme</keyword>
<keyword id="KW-0408">Iron</keyword>
<keyword id="KW-0472">Membrane</keyword>
<keyword id="KW-0479">Metal-binding</keyword>
<keyword id="KW-0496">Mitochondrion</keyword>
<keyword id="KW-0999">Mitochondrion inner membrane</keyword>
<keyword id="KW-0679">Respiratory chain</keyword>
<keyword id="KW-0812">Transmembrane</keyword>
<keyword id="KW-1133">Transmembrane helix</keyword>
<keyword id="KW-0813">Transport</keyword>
<keyword id="KW-0830">Ubiquinone</keyword>
<evidence type="ECO:0000250" key="1"/>
<evidence type="ECO:0000250" key="2">
    <source>
        <dbReference type="UniProtKB" id="P00157"/>
    </source>
</evidence>
<evidence type="ECO:0000255" key="3">
    <source>
        <dbReference type="PROSITE-ProRule" id="PRU00967"/>
    </source>
</evidence>
<evidence type="ECO:0000255" key="4">
    <source>
        <dbReference type="PROSITE-ProRule" id="PRU00968"/>
    </source>
</evidence>
<comment type="function">
    <text evidence="2">Component of the ubiquinol-cytochrome c reductase complex (complex III or cytochrome b-c1 complex) that is part of the mitochondrial respiratory chain. The b-c1 complex mediates electron transfer from ubiquinol to cytochrome c. Contributes to the generation of a proton gradient across the mitochondrial membrane that is then used for ATP synthesis.</text>
</comment>
<comment type="cofactor">
    <cofactor evidence="2">
        <name>heme b</name>
        <dbReference type="ChEBI" id="CHEBI:60344"/>
    </cofactor>
    <text evidence="2">Binds 2 heme b groups non-covalently.</text>
</comment>
<comment type="subunit">
    <text evidence="2">The cytochrome bc1 complex contains 11 subunits: 3 respiratory subunits (MT-CYB, CYC1 and UQCRFS1), 2 core proteins (UQCRC1 and UQCRC2) and 6 low-molecular weight proteins (UQCRH/QCR6, UQCRB/QCR7, UQCRQ/QCR8, UQCR10/QCR9, UQCR11/QCR10 and a cleavage product of UQCRFS1). This cytochrome bc1 complex then forms a dimer.</text>
</comment>
<comment type="subcellular location">
    <subcellularLocation>
        <location evidence="2">Mitochondrion inner membrane</location>
        <topology evidence="2">Multi-pass membrane protein</topology>
    </subcellularLocation>
</comment>
<comment type="miscellaneous">
    <text evidence="1">Heme 1 (or BL or b562) is low-potential and absorbs at about 562 nm, and heme 2 (or BH or b566) is high-potential and absorbs at about 566 nm.</text>
</comment>
<comment type="similarity">
    <text evidence="3 4">Belongs to the cytochrome b family.</text>
</comment>
<comment type="caution">
    <text evidence="2">The full-length protein contains only eight transmembrane helices, not nine as predicted by bioinformatics tools.</text>
</comment>
<proteinExistence type="inferred from homology"/>
<feature type="chain" id="PRO_0000060841" description="Cytochrome b">
    <location>
        <begin position="1"/>
        <end position="379"/>
    </location>
</feature>
<feature type="transmembrane region" description="Helical" evidence="2">
    <location>
        <begin position="33"/>
        <end position="53"/>
    </location>
</feature>
<feature type="transmembrane region" description="Helical" evidence="2">
    <location>
        <begin position="77"/>
        <end position="98"/>
    </location>
</feature>
<feature type="transmembrane region" description="Helical" evidence="2">
    <location>
        <begin position="113"/>
        <end position="133"/>
    </location>
</feature>
<feature type="transmembrane region" description="Helical" evidence="2">
    <location>
        <begin position="178"/>
        <end position="198"/>
    </location>
</feature>
<feature type="transmembrane region" description="Helical" evidence="2">
    <location>
        <begin position="226"/>
        <end position="246"/>
    </location>
</feature>
<feature type="transmembrane region" description="Helical" evidence="2">
    <location>
        <begin position="288"/>
        <end position="308"/>
    </location>
</feature>
<feature type="transmembrane region" description="Helical" evidence="2">
    <location>
        <begin position="320"/>
        <end position="340"/>
    </location>
</feature>
<feature type="transmembrane region" description="Helical" evidence="2">
    <location>
        <begin position="347"/>
        <end position="367"/>
    </location>
</feature>
<feature type="binding site" description="axial binding residue" evidence="2">
    <location>
        <position position="83"/>
    </location>
    <ligand>
        <name>heme b</name>
        <dbReference type="ChEBI" id="CHEBI:60344"/>
        <label>b562</label>
    </ligand>
    <ligandPart>
        <name>Fe</name>
        <dbReference type="ChEBI" id="CHEBI:18248"/>
    </ligandPart>
</feature>
<feature type="binding site" description="axial binding residue" evidence="2">
    <location>
        <position position="97"/>
    </location>
    <ligand>
        <name>heme b</name>
        <dbReference type="ChEBI" id="CHEBI:60344"/>
        <label>b566</label>
    </ligand>
    <ligandPart>
        <name>Fe</name>
        <dbReference type="ChEBI" id="CHEBI:18248"/>
    </ligandPart>
</feature>
<feature type="binding site" description="axial binding residue" evidence="2">
    <location>
        <position position="182"/>
    </location>
    <ligand>
        <name>heme b</name>
        <dbReference type="ChEBI" id="CHEBI:60344"/>
        <label>b562</label>
    </ligand>
    <ligandPart>
        <name>Fe</name>
        <dbReference type="ChEBI" id="CHEBI:18248"/>
    </ligandPart>
</feature>
<feature type="binding site" description="axial binding residue" evidence="2">
    <location>
        <position position="196"/>
    </location>
    <ligand>
        <name>heme b</name>
        <dbReference type="ChEBI" id="CHEBI:60344"/>
        <label>b566</label>
    </ligand>
    <ligandPart>
        <name>Fe</name>
        <dbReference type="ChEBI" id="CHEBI:18248"/>
    </ligandPart>
</feature>
<feature type="binding site" evidence="2">
    <location>
        <position position="201"/>
    </location>
    <ligand>
        <name>a ubiquinone</name>
        <dbReference type="ChEBI" id="CHEBI:16389"/>
    </ligand>
</feature>
<reference key="1">
    <citation type="journal article" date="2001" name="Mol. Biol. Evol.">
        <title>Recurrent amplifications and deletions of satellite DNA accompanied chromosomal diversification in South American tuco-tucos (genus Ctenomys, Rodentia: Octodontidae): a phylogenetic approach.</title>
        <authorList>
            <person name="Slamovits C.H."/>
            <person name="Cook J.A."/>
            <person name="Lessa E.P."/>
            <person name="Rossi M.S."/>
        </authorList>
    </citation>
    <scope>NUCLEOTIDE SEQUENCE [GENOMIC DNA]</scope>
    <source>
        <strain>Isolate I734</strain>
    </source>
</reference>
<organism>
    <name type="scientific">Ctenomys talarum</name>
    <name type="common">Talas tuco-tuco</name>
    <dbReference type="NCBI Taxonomy" id="55520"/>
    <lineage>
        <taxon>Eukaryota</taxon>
        <taxon>Metazoa</taxon>
        <taxon>Chordata</taxon>
        <taxon>Craniata</taxon>
        <taxon>Vertebrata</taxon>
        <taxon>Euteleostomi</taxon>
        <taxon>Mammalia</taxon>
        <taxon>Eutheria</taxon>
        <taxon>Euarchontoglires</taxon>
        <taxon>Glires</taxon>
        <taxon>Rodentia</taxon>
        <taxon>Hystricomorpha</taxon>
        <taxon>Ctenomyidae</taxon>
        <taxon>Ctenomys</taxon>
    </lineage>
</organism>